<organism>
    <name type="scientific">Jannaschia sp. (strain CCS1)</name>
    <dbReference type="NCBI Taxonomy" id="290400"/>
    <lineage>
        <taxon>Bacteria</taxon>
        <taxon>Pseudomonadati</taxon>
        <taxon>Pseudomonadota</taxon>
        <taxon>Alphaproteobacteria</taxon>
        <taxon>Rhodobacterales</taxon>
        <taxon>Roseobacteraceae</taxon>
        <taxon>Jannaschia</taxon>
    </lineage>
</organism>
<proteinExistence type="inferred from homology"/>
<protein>
    <recommendedName>
        <fullName evidence="1">Cell division protein FtsQ</fullName>
    </recommendedName>
</protein>
<evidence type="ECO:0000255" key="1">
    <source>
        <dbReference type="HAMAP-Rule" id="MF_00911"/>
    </source>
</evidence>
<evidence type="ECO:0000255" key="2">
    <source>
        <dbReference type="PROSITE-ProRule" id="PRU01115"/>
    </source>
</evidence>
<evidence type="ECO:0000256" key="3">
    <source>
        <dbReference type="SAM" id="MobiDB-lite"/>
    </source>
</evidence>
<keyword id="KW-0131">Cell cycle</keyword>
<keyword id="KW-0132">Cell division</keyword>
<keyword id="KW-0997">Cell inner membrane</keyword>
<keyword id="KW-1003">Cell membrane</keyword>
<keyword id="KW-0472">Membrane</keyword>
<keyword id="KW-1185">Reference proteome</keyword>
<keyword id="KW-0812">Transmembrane</keyword>
<keyword id="KW-1133">Transmembrane helix</keyword>
<accession>Q28NP3</accession>
<dbReference type="EMBL" id="CP000264">
    <property type="protein sequence ID" value="ABD55669.1"/>
    <property type="molecule type" value="Genomic_DNA"/>
</dbReference>
<dbReference type="SMR" id="Q28NP3"/>
<dbReference type="STRING" id="290400.Jann_2752"/>
<dbReference type="KEGG" id="jan:Jann_2752"/>
<dbReference type="eggNOG" id="COG1589">
    <property type="taxonomic scope" value="Bacteria"/>
</dbReference>
<dbReference type="HOGENOM" id="CLU_061141_0_0_5"/>
<dbReference type="Proteomes" id="UP000008326">
    <property type="component" value="Chromosome"/>
</dbReference>
<dbReference type="GO" id="GO:0032153">
    <property type="term" value="C:cell division site"/>
    <property type="evidence" value="ECO:0007669"/>
    <property type="project" value="UniProtKB-UniRule"/>
</dbReference>
<dbReference type="GO" id="GO:0005886">
    <property type="term" value="C:plasma membrane"/>
    <property type="evidence" value="ECO:0007669"/>
    <property type="project" value="UniProtKB-SubCell"/>
</dbReference>
<dbReference type="GO" id="GO:0090529">
    <property type="term" value="P:cell septum assembly"/>
    <property type="evidence" value="ECO:0007669"/>
    <property type="project" value="InterPro"/>
</dbReference>
<dbReference type="GO" id="GO:0043093">
    <property type="term" value="P:FtsZ-dependent cytokinesis"/>
    <property type="evidence" value="ECO:0007669"/>
    <property type="project" value="UniProtKB-UniRule"/>
</dbReference>
<dbReference type="HAMAP" id="MF_00911">
    <property type="entry name" value="FtsQ_subfam"/>
    <property type="match status" value="1"/>
</dbReference>
<dbReference type="InterPro" id="IPR005548">
    <property type="entry name" value="Cell_div_FtsQ/DivIB_C"/>
</dbReference>
<dbReference type="InterPro" id="IPR026579">
    <property type="entry name" value="FtsQ"/>
</dbReference>
<dbReference type="InterPro" id="IPR034746">
    <property type="entry name" value="POTRA"/>
</dbReference>
<dbReference type="InterPro" id="IPR013685">
    <property type="entry name" value="POTRA_FtsQ_type"/>
</dbReference>
<dbReference type="PANTHER" id="PTHR35851">
    <property type="entry name" value="CELL DIVISION PROTEIN FTSQ"/>
    <property type="match status" value="1"/>
</dbReference>
<dbReference type="PANTHER" id="PTHR35851:SF1">
    <property type="entry name" value="CELL DIVISION PROTEIN FTSQ"/>
    <property type="match status" value="1"/>
</dbReference>
<dbReference type="Pfam" id="PF03799">
    <property type="entry name" value="FtsQ_DivIB_C"/>
    <property type="match status" value="1"/>
</dbReference>
<dbReference type="Pfam" id="PF08478">
    <property type="entry name" value="POTRA_1"/>
    <property type="match status" value="1"/>
</dbReference>
<dbReference type="PROSITE" id="PS51779">
    <property type="entry name" value="POTRA"/>
    <property type="match status" value="1"/>
</dbReference>
<comment type="function">
    <text evidence="1">Essential cell division protein.</text>
</comment>
<comment type="subcellular location">
    <subcellularLocation>
        <location evidence="1">Cell inner membrane</location>
        <topology evidence="1">Single-pass type II membrane protein</topology>
    </subcellularLocation>
    <text evidence="1">Localizes to the division septum.</text>
</comment>
<comment type="similarity">
    <text evidence="1">Belongs to the FtsQ/DivIB family. FtsQ subfamily.</text>
</comment>
<gene>
    <name evidence="1" type="primary">ftsQ</name>
    <name type="ordered locus">Jann_2752</name>
</gene>
<name>FTSQ_JANSC</name>
<feature type="chain" id="PRO_0000414673" description="Cell division protein FtsQ">
    <location>
        <begin position="1"/>
        <end position="311"/>
    </location>
</feature>
<feature type="topological domain" description="Cytoplasmic" evidence="1">
    <location>
        <begin position="1"/>
        <end position="46"/>
    </location>
</feature>
<feature type="transmembrane region" description="Helical" evidence="1">
    <location>
        <begin position="47"/>
        <end position="67"/>
    </location>
</feature>
<feature type="topological domain" description="Periplasmic" evidence="1">
    <location>
        <begin position="68"/>
        <end position="311"/>
    </location>
</feature>
<feature type="domain" description="POTRA" evidence="2">
    <location>
        <begin position="91"/>
        <end position="159"/>
    </location>
</feature>
<feature type="region of interest" description="Disordered" evidence="3">
    <location>
        <begin position="1"/>
        <end position="28"/>
    </location>
</feature>
<reference key="1">
    <citation type="submission" date="2006-02" db="EMBL/GenBank/DDBJ databases">
        <title>Complete sequence of chromosome of Jannaschia sp. CCS1.</title>
        <authorList>
            <consortium name="US DOE Joint Genome Institute"/>
            <person name="Copeland A."/>
            <person name="Lucas S."/>
            <person name="Lapidus A."/>
            <person name="Barry K."/>
            <person name="Detter J.C."/>
            <person name="Glavina del Rio T."/>
            <person name="Hammon N."/>
            <person name="Israni S."/>
            <person name="Pitluck S."/>
            <person name="Brettin T."/>
            <person name="Bruce D."/>
            <person name="Han C."/>
            <person name="Tapia R."/>
            <person name="Gilna P."/>
            <person name="Chertkov O."/>
            <person name="Saunders E."/>
            <person name="Schmutz J."/>
            <person name="Larimer F."/>
            <person name="Land M."/>
            <person name="Kyrpides N."/>
            <person name="Lykidis A."/>
            <person name="Moran M.A."/>
            <person name="Belas R."/>
            <person name="Ye W."/>
            <person name="Buchan A."/>
            <person name="Gonzalez J.M."/>
            <person name="Schell M.A."/>
            <person name="Richardson P."/>
        </authorList>
    </citation>
    <scope>NUCLEOTIDE SEQUENCE [LARGE SCALE GENOMIC DNA]</scope>
    <source>
        <strain>CCS1</strain>
    </source>
</reference>
<sequence>MTTRSPARPLIARRSTPAPTPAPHDPAPSRLSYRVTRLWLTPIFRKALHLGIPVFALFAAVTWYLGDETRVAELFEAVQEIRREVENRPEFRVNVLGIDGASDDVTEQVRAALALDLPISSFDLDLDELRGRLEALPPVRTADLRIQSGGYLAVRIDERIPAAVWLTHEGLSIVDGDGIFVAGFGTRELAAPLPLLGGEGANLAVPEALALMEASSILDDRVHGLVRMGERRWDVVLTNGSRILLPEIGAAAALDRVLALDDMGEILSRDVTAVDVRNPGRLTVRLTDAAMEELQRLQTLAAERPDGDTRG</sequence>